<protein>
    <recommendedName>
        <fullName evidence="1">UvrABC system protein B</fullName>
        <shortName evidence="1">Protein UvrB</shortName>
    </recommendedName>
    <alternativeName>
        <fullName evidence="1">Excinuclease ABC subunit B</fullName>
    </alternativeName>
</protein>
<organism>
    <name type="scientific">Escherichia coli (strain SMS-3-5 / SECEC)</name>
    <dbReference type="NCBI Taxonomy" id="439855"/>
    <lineage>
        <taxon>Bacteria</taxon>
        <taxon>Pseudomonadati</taxon>
        <taxon>Pseudomonadota</taxon>
        <taxon>Gammaproteobacteria</taxon>
        <taxon>Enterobacterales</taxon>
        <taxon>Enterobacteriaceae</taxon>
        <taxon>Escherichia</taxon>
    </lineage>
</organism>
<gene>
    <name evidence="1" type="primary">uvrB</name>
    <name type="ordered locus">EcSMS35_0802</name>
</gene>
<evidence type="ECO:0000255" key="1">
    <source>
        <dbReference type="HAMAP-Rule" id="MF_00204"/>
    </source>
</evidence>
<evidence type="ECO:0000256" key="2">
    <source>
        <dbReference type="SAM" id="MobiDB-lite"/>
    </source>
</evidence>
<name>UVRB_ECOSM</name>
<proteinExistence type="inferred from homology"/>
<accession>B1LM70</accession>
<sequence length="673" mass="76226">MSKPFKLNSAFKPSGDQPEAIRRLEEGLEDGLAHQTLLGVTGSGKTFTIANVIADLQRPTMVLAPNKTLAAQLYGEMKEFFPENAVEYFVSYYDYYQPEAYVPSSDTFIEKDASVNEHIEQMRLSATKAMLERRDVVVVASVSAIYGLGDPDLYLKMMLHLTVGMIIDQRAILRRLAELQYARNDQAFQRGTFRVRGEVIDIFPAESDDIALRVELFDEEVERLSLFDPLTGQIVSTIPRFTIYPKTHYVTPRERIVQAMEEIKEELAARRKVLLENNKLLEEQRLTQRTQFDLEMMNELGYCSGIENYSRFLSGRGPGEPPPTLFDYLPADGLLVVDESHVTIPQIGGMYRGDRARKETLVEYGFRLPSALDNRPLKFEEFEALAPQTIYVSATPGNYELEKSGGDVVDQVVRPTGLLDPIIEVRPVATQVDDLLSEIRQRAAINERVLVTTLTKRMAEDLTEYLEEHGERVRYLHSDIDTVERMEIIRDLRLGEFDVLVGINLLREGLDMPEVSLVAILDADKEGFLRSERSLIQTIGRAARNVNGKAILYGDKITPSMAKAIGETERRREKQQKYNEEHGITPQGLNKKVVDILALGQNIAKTKAKGRGKSRPIVEPDNVPMDMSPKALQQKIHELEGLMMQHAQNLEFEEAAQIRDQLHQLRELFIAAS</sequence>
<dbReference type="EMBL" id="CP000970">
    <property type="protein sequence ID" value="ACB18192.1"/>
    <property type="molecule type" value="Genomic_DNA"/>
</dbReference>
<dbReference type="RefSeq" id="WP_000042533.1">
    <property type="nucleotide sequence ID" value="NC_010498.1"/>
</dbReference>
<dbReference type="BMRB" id="B1LM70"/>
<dbReference type="SMR" id="B1LM70"/>
<dbReference type="GeneID" id="93776651"/>
<dbReference type="KEGG" id="ecm:EcSMS35_0802"/>
<dbReference type="HOGENOM" id="CLU_009621_2_1_6"/>
<dbReference type="Proteomes" id="UP000007011">
    <property type="component" value="Chromosome"/>
</dbReference>
<dbReference type="GO" id="GO:0005737">
    <property type="term" value="C:cytoplasm"/>
    <property type="evidence" value="ECO:0007669"/>
    <property type="project" value="UniProtKB-SubCell"/>
</dbReference>
<dbReference type="GO" id="GO:0009380">
    <property type="term" value="C:excinuclease repair complex"/>
    <property type="evidence" value="ECO:0007669"/>
    <property type="project" value="InterPro"/>
</dbReference>
<dbReference type="GO" id="GO:0005524">
    <property type="term" value="F:ATP binding"/>
    <property type="evidence" value="ECO:0007669"/>
    <property type="project" value="UniProtKB-UniRule"/>
</dbReference>
<dbReference type="GO" id="GO:0016887">
    <property type="term" value="F:ATP hydrolysis activity"/>
    <property type="evidence" value="ECO:0007669"/>
    <property type="project" value="InterPro"/>
</dbReference>
<dbReference type="GO" id="GO:0003677">
    <property type="term" value="F:DNA binding"/>
    <property type="evidence" value="ECO:0007669"/>
    <property type="project" value="UniProtKB-UniRule"/>
</dbReference>
<dbReference type="GO" id="GO:0009381">
    <property type="term" value="F:excinuclease ABC activity"/>
    <property type="evidence" value="ECO:0007669"/>
    <property type="project" value="UniProtKB-UniRule"/>
</dbReference>
<dbReference type="GO" id="GO:0004386">
    <property type="term" value="F:helicase activity"/>
    <property type="evidence" value="ECO:0007669"/>
    <property type="project" value="UniProtKB-KW"/>
</dbReference>
<dbReference type="GO" id="GO:0006289">
    <property type="term" value="P:nucleotide-excision repair"/>
    <property type="evidence" value="ECO:0007669"/>
    <property type="project" value="UniProtKB-UniRule"/>
</dbReference>
<dbReference type="GO" id="GO:0009432">
    <property type="term" value="P:SOS response"/>
    <property type="evidence" value="ECO:0007669"/>
    <property type="project" value="UniProtKB-UniRule"/>
</dbReference>
<dbReference type="CDD" id="cd17916">
    <property type="entry name" value="DEXHc_UvrB"/>
    <property type="match status" value="1"/>
</dbReference>
<dbReference type="CDD" id="cd18790">
    <property type="entry name" value="SF2_C_UvrB"/>
    <property type="match status" value="1"/>
</dbReference>
<dbReference type="FunFam" id="3.40.50.300:FF:000257">
    <property type="entry name" value="UvrABC system protein B"/>
    <property type="match status" value="1"/>
</dbReference>
<dbReference type="FunFam" id="3.40.50.300:FF:000401">
    <property type="entry name" value="UvrABC system protein B"/>
    <property type="match status" value="1"/>
</dbReference>
<dbReference type="FunFam" id="3.40.50.300:FF:000477">
    <property type="entry name" value="UvrABC system protein B"/>
    <property type="match status" value="1"/>
</dbReference>
<dbReference type="Gene3D" id="3.40.50.300">
    <property type="entry name" value="P-loop containing nucleotide triphosphate hydrolases"/>
    <property type="match status" value="3"/>
</dbReference>
<dbReference type="Gene3D" id="4.10.860.10">
    <property type="entry name" value="UVR domain"/>
    <property type="match status" value="1"/>
</dbReference>
<dbReference type="HAMAP" id="MF_00204">
    <property type="entry name" value="UvrB"/>
    <property type="match status" value="1"/>
</dbReference>
<dbReference type="InterPro" id="IPR006935">
    <property type="entry name" value="Helicase/UvrB_N"/>
</dbReference>
<dbReference type="InterPro" id="IPR014001">
    <property type="entry name" value="Helicase_ATP-bd"/>
</dbReference>
<dbReference type="InterPro" id="IPR001650">
    <property type="entry name" value="Helicase_C-like"/>
</dbReference>
<dbReference type="InterPro" id="IPR027417">
    <property type="entry name" value="P-loop_NTPase"/>
</dbReference>
<dbReference type="InterPro" id="IPR001943">
    <property type="entry name" value="UVR_dom"/>
</dbReference>
<dbReference type="InterPro" id="IPR036876">
    <property type="entry name" value="UVR_dom_sf"/>
</dbReference>
<dbReference type="InterPro" id="IPR004807">
    <property type="entry name" value="UvrB"/>
</dbReference>
<dbReference type="InterPro" id="IPR041471">
    <property type="entry name" value="UvrB_inter"/>
</dbReference>
<dbReference type="InterPro" id="IPR024759">
    <property type="entry name" value="UvrB_YAD/RRR_dom"/>
</dbReference>
<dbReference type="NCBIfam" id="NF003673">
    <property type="entry name" value="PRK05298.1"/>
    <property type="match status" value="1"/>
</dbReference>
<dbReference type="NCBIfam" id="TIGR00631">
    <property type="entry name" value="uvrb"/>
    <property type="match status" value="1"/>
</dbReference>
<dbReference type="PANTHER" id="PTHR24029">
    <property type="entry name" value="UVRABC SYSTEM PROTEIN B"/>
    <property type="match status" value="1"/>
</dbReference>
<dbReference type="PANTHER" id="PTHR24029:SF0">
    <property type="entry name" value="UVRABC SYSTEM PROTEIN B"/>
    <property type="match status" value="1"/>
</dbReference>
<dbReference type="Pfam" id="PF00271">
    <property type="entry name" value="Helicase_C"/>
    <property type="match status" value="1"/>
</dbReference>
<dbReference type="Pfam" id="PF04851">
    <property type="entry name" value="ResIII"/>
    <property type="match status" value="1"/>
</dbReference>
<dbReference type="Pfam" id="PF02151">
    <property type="entry name" value="UVR"/>
    <property type="match status" value="1"/>
</dbReference>
<dbReference type="Pfam" id="PF12344">
    <property type="entry name" value="UvrB"/>
    <property type="match status" value="1"/>
</dbReference>
<dbReference type="Pfam" id="PF17757">
    <property type="entry name" value="UvrB_inter"/>
    <property type="match status" value="1"/>
</dbReference>
<dbReference type="SMART" id="SM00487">
    <property type="entry name" value="DEXDc"/>
    <property type="match status" value="1"/>
</dbReference>
<dbReference type="SMART" id="SM00490">
    <property type="entry name" value="HELICc"/>
    <property type="match status" value="1"/>
</dbReference>
<dbReference type="SUPFAM" id="SSF46600">
    <property type="entry name" value="C-terminal UvrC-binding domain of UvrB"/>
    <property type="match status" value="1"/>
</dbReference>
<dbReference type="SUPFAM" id="SSF52540">
    <property type="entry name" value="P-loop containing nucleoside triphosphate hydrolases"/>
    <property type="match status" value="2"/>
</dbReference>
<dbReference type="PROSITE" id="PS51192">
    <property type="entry name" value="HELICASE_ATP_BIND_1"/>
    <property type="match status" value="1"/>
</dbReference>
<dbReference type="PROSITE" id="PS51194">
    <property type="entry name" value="HELICASE_CTER"/>
    <property type="match status" value="1"/>
</dbReference>
<dbReference type="PROSITE" id="PS50151">
    <property type="entry name" value="UVR"/>
    <property type="match status" value="1"/>
</dbReference>
<reference key="1">
    <citation type="journal article" date="2008" name="J. Bacteriol.">
        <title>Insights into the environmental resistance gene pool from the genome sequence of the multidrug-resistant environmental isolate Escherichia coli SMS-3-5.</title>
        <authorList>
            <person name="Fricke W.F."/>
            <person name="Wright M.S."/>
            <person name="Lindell A.H."/>
            <person name="Harkins D.M."/>
            <person name="Baker-Austin C."/>
            <person name="Ravel J."/>
            <person name="Stepanauskas R."/>
        </authorList>
    </citation>
    <scope>NUCLEOTIDE SEQUENCE [LARGE SCALE GENOMIC DNA]</scope>
    <source>
        <strain>SMS-3-5 / SECEC</strain>
    </source>
</reference>
<keyword id="KW-0067">ATP-binding</keyword>
<keyword id="KW-0963">Cytoplasm</keyword>
<keyword id="KW-0227">DNA damage</keyword>
<keyword id="KW-0228">DNA excision</keyword>
<keyword id="KW-0234">DNA repair</keyword>
<keyword id="KW-0267">Excision nuclease</keyword>
<keyword id="KW-0347">Helicase</keyword>
<keyword id="KW-0378">Hydrolase</keyword>
<keyword id="KW-0547">Nucleotide-binding</keyword>
<keyword id="KW-0742">SOS response</keyword>
<feature type="chain" id="PRO_1000200541" description="UvrABC system protein B">
    <location>
        <begin position="1"/>
        <end position="673"/>
    </location>
</feature>
<feature type="domain" description="Helicase ATP-binding" evidence="1">
    <location>
        <begin position="26"/>
        <end position="183"/>
    </location>
</feature>
<feature type="domain" description="Helicase C-terminal" evidence="1">
    <location>
        <begin position="431"/>
        <end position="597"/>
    </location>
</feature>
<feature type="domain" description="UVR" evidence="1">
    <location>
        <begin position="633"/>
        <end position="668"/>
    </location>
</feature>
<feature type="region of interest" description="Disordered" evidence="2">
    <location>
        <begin position="608"/>
        <end position="627"/>
    </location>
</feature>
<feature type="short sequence motif" description="Beta-hairpin">
    <location>
        <begin position="92"/>
        <end position="115"/>
    </location>
</feature>
<feature type="binding site" evidence="1">
    <location>
        <begin position="39"/>
        <end position="46"/>
    </location>
    <ligand>
        <name>ATP</name>
        <dbReference type="ChEBI" id="CHEBI:30616"/>
    </ligand>
</feature>
<comment type="function">
    <text evidence="1">The UvrABC repair system catalyzes the recognition and processing of DNA lesions. A damage recognition complex composed of 2 UvrA and 2 UvrB subunits scans DNA for abnormalities. Upon binding of the UvrA(2)B(2) complex to a putative damaged site, the DNA wraps around one UvrB monomer. DNA wrap is dependent on ATP binding by UvrB and probably causes local melting of the DNA helix, facilitating insertion of UvrB beta-hairpin between the DNA strands. Then UvrB probes one DNA strand for the presence of a lesion. If a lesion is found the UvrA subunits dissociate and the UvrB-DNA preincision complex is formed. This complex is subsequently bound by UvrC and the second UvrB is released. If no lesion is found, the DNA wraps around the other UvrB subunit that will check the other stand for damage.</text>
</comment>
<comment type="subunit">
    <text evidence="1">Forms a heterotetramer with UvrA during the search for lesions. Interacts with UvrC in an incision complex.</text>
</comment>
<comment type="subcellular location">
    <subcellularLocation>
        <location evidence="1">Cytoplasm</location>
    </subcellularLocation>
</comment>
<comment type="domain">
    <text evidence="1">The beta-hairpin motif is involved in DNA binding.</text>
</comment>
<comment type="similarity">
    <text evidence="1">Belongs to the UvrB family.</text>
</comment>